<sequence length="179" mass="19444">MSRIGKQPVPVPAGVDVNIDGQNISVKGSKGTLELTVSEPISVSRNDDGAIVVTRPDDERRNRSLHGLSRTLIANLVTGVTQGYTTKMEIFGVGYRVVAKGSNLEFALGYSHPVLIEAPEGITFAVETPTKFSISGIDKQKVGQISANIRRLRRPDPYKGKGIRYEGEQIRRKVGKTGK</sequence>
<dbReference type="EMBL" id="CU458896">
    <property type="protein sequence ID" value="CAM63872.1"/>
    <property type="molecule type" value="Genomic_DNA"/>
</dbReference>
<dbReference type="RefSeq" id="WP_005055712.1">
    <property type="nucleotide sequence ID" value="NZ_MLCG01000001.1"/>
</dbReference>
<dbReference type="SMR" id="B1MGC7"/>
<dbReference type="GeneID" id="93380737"/>
<dbReference type="KEGG" id="mab:MAB_3797c"/>
<dbReference type="Proteomes" id="UP000007137">
    <property type="component" value="Chromosome"/>
</dbReference>
<dbReference type="GO" id="GO:0022625">
    <property type="term" value="C:cytosolic large ribosomal subunit"/>
    <property type="evidence" value="ECO:0007669"/>
    <property type="project" value="TreeGrafter"/>
</dbReference>
<dbReference type="GO" id="GO:0019843">
    <property type="term" value="F:rRNA binding"/>
    <property type="evidence" value="ECO:0007669"/>
    <property type="project" value="UniProtKB-UniRule"/>
</dbReference>
<dbReference type="GO" id="GO:0003735">
    <property type="term" value="F:structural constituent of ribosome"/>
    <property type="evidence" value="ECO:0007669"/>
    <property type="project" value="InterPro"/>
</dbReference>
<dbReference type="GO" id="GO:0002181">
    <property type="term" value="P:cytoplasmic translation"/>
    <property type="evidence" value="ECO:0007669"/>
    <property type="project" value="TreeGrafter"/>
</dbReference>
<dbReference type="FunFam" id="3.90.930.12:FF:000001">
    <property type="entry name" value="50S ribosomal protein L6"/>
    <property type="match status" value="1"/>
</dbReference>
<dbReference type="FunFam" id="3.90.930.12:FF:000002">
    <property type="entry name" value="50S ribosomal protein L6"/>
    <property type="match status" value="1"/>
</dbReference>
<dbReference type="Gene3D" id="3.90.930.12">
    <property type="entry name" value="Ribosomal protein L6, alpha-beta domain"/>
    <property type="match status" value="2"/>
</dbReference>
<dbReference type="HAMAP" id="MF_01365_B">
    <property type="entry name" value="Ribosomal_uL6_B"/>
    <property type="match status" value="1"/>
</dbReference>
<dbReference type="InterPro" id="IPR000702">
    <property type="entry name" value="Ribosomal_uL6-like"/>
</dbReference>
<dbReference type="InterPro" id="IPR036789">
    <property type="entry name" value="Ribosomal_uL6-like_a/b-dom_sf"/>
</dbReference>
<dbReference type="InterPro" id="IPR020040">
    <property type="entry name" value="Ribosomal_uL6_a/b-dom"/>
</dbReference>
<dbReference type="InterPro" id="IPR019906">
    <property type="entry name" value="Ribosomal_uL6_bac-type"/>
</dbReference>
<dbReference type="InterPro" id="IPR002358">
    <property type="entry name" value="Ribosomal_uL6_CS"/>
</dbReference>
<dbReference type="NCBIfam" id="TIGR03654">
    <property type="entry name" value="L6_bact"/>
    <property type="match status" value="1"/>
</dbReference>
<dbReference type="PANTHER" id="PTHR11655">
    <property type="entry name" value="60S/50S RIBOSOMAL PROTEIN L6/L9"/>
    <property type="match status" value="1"/>
</dbReference>
<dbReference type="PANTHER" id="PTHR11655:SF14">
    <property type="entry name" value="LARGE RIBOSOMAL SUBUNIT PROTEIN UL6M"/>
    <property type="match status" value="1"/>
</dbReference>
<dbReference type="Pfam" id="PF00347">
    <property type="entry name" value="Ribosomal_L6"/>
    <property type="match status" value="2"/>
</dbReference>
<dbReference type="PIRSF" id="PIRSF002162">
    <property type="entry name" value="Ribosomal_L6"/>
    <property type="match status" value="1"/>
</dbReference>
<dbReference type="PRINTS" id="PR00059">
    <property type="entry name" value="RIBOSOMALL6"/>
</dbReference>
<dbReference type="SUPFAM" id="SSF56053">
    <property type="entry name" value="Ribosomal protein L6"/>
    <property type="match status" value="2"/>
</dbReference>
<dbReference type="PROSITE" id="PS00525">
    <property type="entry name" value="RIBOSOMAL_L6_1"/>
    <property type="match status" value="1"/>
</dbReference>
<gene>
    <name evidence="1" type="primary">rplF</name>
    <name type="ordered locus">MAB_3797c</name>
</gene>
<reference key="1">
    <citation type="journal article" date="2009" name="PLoS ONE">
        <title>Non mycobacterial virulence genes in the genome of the emerging pathogen Mycobacterium abscessus.</title>
        <authorList>
            <person name="Ripoll F."/>
            <person name="Pasek S."/>
            <person name="Schenowitz C."/>
            <person name="Dossat C."/>
            <person name="Barbe V."/>
            <person name="Rottman M."/>
            <person name="Macheras E."/>
            <person name="Heym B."/>
            <person name="Herrmann J.L."/>
            <person name="Daffe M."/>
            <person name="Brosch R."/>
            <person name="Risler J.L."/>
            <person name="Gaillard J.L."/>
        </authorList>
    </citation>
    <scope>NUCLEOTIDE SEQUENCE [LARGE SCALE GENOMIC DNA]</scope>
    <source>
        <strain>ATCC 19977 / DSM 44196 / CCUG 20993 / CIP 104536 / JCM 13569 / NCTC 13031 / TMC 1543 / L948</strain>
    </source>
</reference>
<feature type="chain" id="PRO_1000144019" description="Large ribosomal subunit protein uL6">
    <location>
        <begin position="1"/>
        <end position="179"/>
    </location>
</feature>
<proteinExistence type="inferred from homology"/>
<comment type="function">
    <text evidence="1">This protein binds to the 23S rRNA, and is important in its secondary structure. It is located near the subunit interface in the base of the L7/L12 stalk, and near the tRNA binding site of the peptidyltransferase center.</text>
</comment>
<comment type="subunit">
    <text evidence="1">Part of the 50S ribosomal subunit.</text>
</comment>
<comment type="similarity">
    <text evidence="1">Belongs to the universal ribosomal protein uL6 family.</text>
</comment>
<evidence type="ECO:0000255" key="1">
    <source>
        <dbReference type="HAMAP-Rule" id="MF_01365"/>
    </source>
</evidence>
<evidence type="ECO:0000305" key="2"/>
<keyword id="KW-1185">Reference proteome</keyword>
<keyword id="KW-0687">Ribonucleoprotein</keyword>
<keyword id="KW-0689">Ribosomal protein</keyword>
<keyword id="KW-0694">RNA-binding</keyword>
<keyword id="KW-0699">rRNA-binding</keyword>
<name>RL6_MYCA9</name>
<protein>
    <recommendedName>
        <fullName evidence="1">Large ribosomal subunit protein uL6</fullName>
    </recommendedName>
    <alternativeName>
        <fullName evidence="2">50S ribosomal protein L6</fullName>
    </alternativeName>
</protein>
<organism>
    <name type="scientific">Mycobacteroides abscessus (strain ATCC 19977 / DSM 44196 / CCUG 20993 / CIP 104536 / JCM 13569 / NCTC 13031 / TMC 1543 / L948)</name>
    <name type="common">Mycobacterium abscessus</name>
    <dbReference type="NCBI Taxonomy" id="561007"/>
    <lineage>
        <taxon>Bacteria</taxon>
        <taxon>Bacillati</taxon>
        <taxon>Actinomycetota</taxon>
        <taxon>Actinomycetes</taxon>
        <taxon>Mycobacteriales</taxon>
        <taxon>Mycobacteriaceae</taxon>
        <taxon>Mycobacteroides</taxon>
        <taxon>Mycobacteroides abscessus</taxon>
    </lineage>
</organism>
<accession>B1MGC7</accession>